<sequence>MHRIDETFRRLRAQSRKALIPFITAGDPSLEAAVPVMHALVRAGADVIELGVPFSDPMADGPVIQHSSERALQRGVGLAYVLQTVDVFRQSDAVTPVVLMGYLNPLEIYGIARFTQQALASGVDGVLLVDLPPEEADEIRAIFSAAGLALIVLASPTTSASRLATLSGVAQGYLYYVSFAGVTGADRLDAQSAGDRLRGLRAQTQVPVVVGFGIRDAASAVVMAVDADGVVVGSALVTALSDAPDVDTACRRADAFLAPLRQALDAVK</sequence>
<comment type="function">
    <text evidence="1">The alpha subunit is responsible for the aldol cleavage of indoleglycerol phosphate to indole and glyceraldehyde 3-phosphate.</text>
</comment>
<comment type="catalytic activity">
    <reaction evidence="1">
        <text>(1S,2R)-1-C-(indol-3-yl)glycerol 3-phosphate + L-serine = D-glyceraldehyde 3-phosphate + L-tryptophan + H2O</text>
        <dbReference type="Rhea" id="RHEA:10532"/>
        <dbReference type="ChEBI" id="CHEBI:15377"/>
        <dbReference type="ChEBI" id="CHEBI:33384"/>
        <dbReference type="ChEBI" id="CHEBI:57912"/>
        <dbReference type="ChEBI" id="CHEBI:58866"/>
        <dbReference type="ChEBI" id="CHEBI:59776"/>
        <dbReference type="EC" id="4.2.1.20"/>
    </reaction>
</comment>
<comment type="pathway">
    <text evidence="1">Amino-acid biosynthesis; L-tryptophan biosynthesis; L-tryptophan from chorismate: step 5/5.</text>
</comment>
<comment type="subunit">
    <text evidence="1">Tetramer of two alpha and two beta chains.</text>
</comment>
<comment type="similarity">
    <text evidence="1">Belongs to the TrpA family.</text>
</comment>
<accession>Q87DR8</accession>
<name>TRPA_XYLFT</name>
<feature type="chain" id="PRO_0000098879" description="Tryptophan synthase alpha chain">
    <location>
        <begin position="1"/>
        <end position="268"/>
    </location>
</feature>
<feature type="active site" description="Proton acceptor" evidence="1">
    <location>
        <position position="49"/>
    </location>
</feature>
<feature type="active site" description="Proton acceptor" evidence="1">
    <location>
        <position position="60"/>
    </location>
</feature>
<gene>
    <name evidence="1" type="primary">trpA</name>
    <name type="ordered locus">PD_0613</name>
</gene>
<protein>
    <recommendedName>
        <fullName evidence="1">Tryptophan synthase alpha chain</fullName>
        <ecNumber evidence="1">4.2.1.20</ecNumber>
    </recommendedName>
</protein>
<proteinExistence type="inferred from homology"/>
<dbReference type="EC" id="4.2.1.20" evidence="1"/>
<dbReference type="EMBL" id="AE009442">
    <property type="protein sequence ID" value="AAO28485.1"/>
    <property type="molecule type" value="Genomic_DNA"/>
</dbReference>
<dbReference type="RefSeq" id="WP_004083823.1">
    <property type="nucleotide sequence ID" value="NC_004556.1"/>
</dbReference>
<dbReference type="SMR" id="Q87DR8"/>
<dbReference type="KEGG" id="xft:PD_0613"/>
<dbReference type="HOGENOM" id="CLU_016734_0_0_6"/>
<dbReference type="UniPathway" id="UPA00035">
    <property type="reaction ID" value="UER00044"/>
</dbReference>
<dbReference type="Proteomes" id="UP000002516">
    <property type="component" value="Chromosome"/>
</dbReference>
<dbReference type="GO" id="GO:0005829">
    <property type="term" value="C:cytosol"/>
    <property type="evidence" value="ECO:0007669"/>
    <property type="project" value="TreeGrafter"/>
</dbReference>
<dbReference type="GO" id="GO:0004834">
    <property type="term" value="F:tryptophan synthase activity"/>
    <property type="evidence" value="ECO:0007669"/>
    <property type="project" value="UniProtKB-UniRule"/>
</dbReference>
<dbReference type="CDD" id="cd04724">
    <property type="entry name" value="Tryptophan_synthase_alpha"/>
    <property type="match status" value="1"/>
</dbReference>
<dbReference type="FunFam" id="3.20.20.70:FF:000037">
    <property type="entry name" value="Tryptophan synthase alpha chain"/>
    <property type="match status" value="1"/>
</dbReference>
<dbReference type="Gene3D" id="3.20.20.70">
    <property type="entry name" value="Aldolase class I"/>
    <property type="match status" value="1"/>
</dbReference>
<dbReference type="HAMAP" id="MF_00131">
    <property type="entry name" value="Trp_synth_alpha"/>
    <property type="match status" value="1"/>
</dbReference>
<dbReference type="InterPro" id="IPR013785">
    <property type="entry name" value="Aldolase_TIM"/>
</dbReference>
<dbReference type="InterPro" id="IPR011060">
    <property type="entry name" value="RibuloseP-bd_barrel"/>
</dbReference>
<dbReference type="InterPro" id="IPR018204">
    <property type="entry name" value="Trp_synthase_alpha_AS"/>
</dbReference>
<dbReference type="InterPro" id="IPR002028">
    <property type="entry name" value="Trp_synthase_suA"/>
</dbReference>
<dbReference type="NCBIfam" id="TIGR00262">
    <property type="entry name" value="trpA"/>
    <property type="match status" value="1"/>
</dbReference>
<dbReference type="PANTHER" id="PTHR43406:SF1">
    <property type="entry name" value="TRYPTOPHAN SYNTHASE ALPHA CHAIN, CHLOROPLASTIC"/>
    <property type="match status" value="1"/>
</dbReference>
<dbReference type="PANTHER" id="PTHR43406">
    <property type="entry name" value="TRYPTOPHAN SYNTHASE, ALPHA CHAIN"/>
    <property type="match status" value="1"/>
</dbReference>
<dbReference type="Pfam" id="PF00290">
    <property type="entry name" value="Trp_syntA"/>
    <property type="match status" value="1"/>
</dbReference>
<dbReference type="SUPFAM" id="SSF51366">
    <property type="entry name" value="Ribulose-phoshate binding barrel"/>
    <property type="match status" value="1"/>
</dbReference>
<dbReference type="PROSITE" id="PS00167">
    <property type="entry name" value="TRP_SYNTHASE_ALPHA"/>
    <property type="match status" value="1"/>
</dbReference>
<reference key="1">
    <citation type="journal article" date="2003" name="J. Bacteriol.">
        <title>Comparative analyses of the complete genome sequences of Pierce's disease and citrus variegated chlorosis strains of Xylella fastidiosa.</title>
        <authorList>
            <person name="Van Sluys M.A."/>
            <person name="de Oliveira M.C."/>
            <person name="Monteiro-Vitorello C.B."/>
            <person name="Miyaki C.Y."/>
            <person name="Furlan L.R."/>
            <person name="Camargo L.E.A."/>
            <person name="da Silva A.C.R."/>
            <person name="Moon D.H."/>
            <person name="Takita M.A."/>
            <person name="Lemos E.G.M."/>
            <person name="Machado M.A."/>
            <person name="Ferro M.I.T."/>
            <person name="da Silva F.R."/>
            <person name="Goldman M.H.S."/>
            <person name="Goldman G.H."/>
            <person name="Lemos M.V.F."/>
            <person name="El-Dorry H."/>
            <person name="Tsai S.M."/>
            <person name="Carrer H."/>
            <person name="Carraro D.M."/>
            <person name="de Oliveira R.C."/>
            <person name="Nunes L.R."/>
            <person name="Siqueira W.J."/>
            <person name="Coutinho L.L."/>
            <person name="Kimura E.T."/>
            <person name="Ferro E.S."/>
            <person name="Harakava R."/>
            <person name="Kuramae E.E."/>
            <person name="Marino C.L."/>
            <person name="Giglioti E."/>
            <person name="Abreu I.L."/>
            <person name="Alves L.M.C."/>
            <person name="do Amaral A.M."/>
            <person name="Baia G.S."/>
            <person name="Blanco S.R."/>
            <person name="Brito M.S."/>
            <person name="Cannavan F.S."/>
            <person name="Celestino A.V."/>
            <person name="da Cunha A.F."/>
            <person name="Fenille R.C."/>
            <person name="Ferro J.A."/>
            <person name="Formighieri E.F."/>
            <person name="Kishi L.T."/>
            <person name="Leoni S.G."/>
            <person name="Oliveira A.R."/>
            <person name="Rosa V.E. Jr."/>
            <person name="Sassaki F.T."/>
            <person name="Sena J.A.D."/>
            <person name="de Souza A.A."/>
            <person name="Truffi D."/>
            <person name="Tsukumo F."/>
            <person name="Yanai G.M."/>
            <person name="Zaros L.G."/>
            <person name="Civerolo E.L."/>
            <person name="Simpson A.J.G."/>
            <person name="Almeida N.F. Jr."/>
            <person name="Setubal J.C."/>
            <person name="Kitajima J.P."/>
        </authorList>
    </citation>
    <scope>NUCLEOTIDE SEQUENCE [LARGE SCALE GENOMIC DNA]</scope>
    <source>
        <strain>Temecula1 / ATCC 700964</strain>
    </source>
</reference>
<evidence type="ECO:0000255" key="1">
    <source>
        <dbReference type="HAMAP-Rule" id="MF_00131"/>
    </source>
</evidence>
<organism>
    <name type="scientific">Xylella fastidiosa (strain Temecula1 / ATCC 700964)</name>
    <dbReference type="NCBI Taxonomy" id="183190"/>
    <lineage>
        <taxon>Bacteria</taxon>
        <taxon>Pseudomonadati</taxon>
        <taxon>Pseudomonadota</taxon>
        <taxon>Gammaproteobacteria</taxon>
        <taxon>Lysobacterales</taxon>
        <taxon>Lysobacteraceae</taxon>
        <taxon>Xylella</taxon>
    </lineage>
</organism>
<keyword id="KW-0028">Amino-acid biosynthesis</keyword>
<keyword id="KW-0057">Aromatic amino acid biosynthesis</keyword>
<keyword id="KW-0456">Lyase</keyword>
<keyword id="KW-1185">Reference proteome</keyword>
<keyword id="KW-0822">Tryptophan biosynthesis</keyword>